<organism>
    <name type="scientific">Nostoc punctiforme (strain ATCC 29133 / PCC 73102)</name>
    <dbReference type="NCBI Taxonomy" id="63737"/>
    <lineage>
        <taxon>Bacteria</taxon>
        <taxon>Bacillati</taxon>
        <taxon>Cyanobacteriota</taxon>
        <taxon>Cyanophyceae</taxon>
        <taxon>Nostocales</taxon>
        <taxon>Nostocaceae</taxon>
        <taxon>Nostoc</taxon>
    </lineage>
</organism>
<dbReference type="EMBL" id="CP001037">
    <property type="protein sequence ID" value="ACC82248.1"/>
    <property type="molecule type" value="Genomic_DNA"/>
</dbReference>
<dbReference type="RefSeq" id="WP_012410219.1">
    <property type="nucleotide sequence ID" value="NC_010628.1"/>
</dbReference>
<dbReference type="SMR" id="B2J591"/>
<dbReference type="STRING" id="63737.Npun_F3864"/>
<dbReference type="EnsemblBacteria" id="ACC82248">
    <property type="protein sequence ID" value="ACC82248"/>
    <property type="gene ID" value="Npun_F3864"/>
</dbReference>
<dbReference type="KEGG" id="npu:Npun_F3864"/>
<dbReference type="eggNOG" id="ENOG502ZMJ2">
    <property type="taxonomic scope" value="Bacteria"/>
</dbReference>
<dbReference type="HOGENOM" id="CLU_092204_1_0_3"/>
<dbReference type="OrthoDB" id="464381at2"/>
<dbReference type="PhylomeDB" id="B2J591"/>
<dbReference type="Proteomes" id="UP000001191">
    <property type="component" value="Chromosome"/>
</dbReference>
<dbReference type="GO" id="GO:0009538">
    <property type="term" value="C:photosystem I reaction center"/>
    <property type="evidence" value="ECO:0007669"/>
    <property type="project" value="InterPro"/>
</dbReference>
<dbReference type="GO" id="GO:0031676">
    <property type="term" value="C:plasma membrane-derived thylakoid membrane"/>
    <property type="evidence" value="ECO:0007669"/>
    <property type="project" value="UniProtKB-SubCell"/>
</dbReference>
<dbReference type="GO" id="GO:0015979">
    <property type="term" value="P:photosynthesis"/>
    <property type="evidence" value="ECO:0007669"/>
    <property type="project" value="UniProtKB-UniRule"/>
</dbReference>
<dbReference type="Gene3D" id="1.20.1240.10">
    <property type="entry name" value="Photosystem I PsaL, reaction centre subunit XI"/>
    <property type="match status" value="1"/>
</dbReference>
<dbReference type="HAMAP" id="MF_00447">
    <property type="entry name" value="PSI_PsaL"/>
    <property type="match status" value="1"/>
</dbReference>
<dbReference type="InterPro" id="IPR003757">
    <property type="entry name" value="PSI_PsaL"/>
</dbReference>
<dbReference type="InterPro" id="IPR036592">
    <property type="entry name" value="PSI_PsaL_sf"/>
</dbReference>
<dbReference type="InterPro" id="IPR022980">
    <property type="entry name" value="PSI_suXI"/>
</dbReference>
<dbReference type="NCBIfam" id="NF001927">
    <property type="entry name" value="PRK00704.1-4"/>
    <property type="match status" value="1"/>
</dbReference>
<dbReference type="PANTHER" id="PTHR34803">
    <property type="entry name" value="PHOTOSYSTEM I REACTION CENTER SUBUNIT XI, CHLOROPLASTIC"/>
    <property type="match status" value="1"/>
</dbReference>
<dbReference type="PANTHER" id="PTHR34803:SF2">
    <property type="entry name" value="PHOTOSYSTEM I REACTION CENTER SUBUNIT XI, CHLOROPLASTIC"/>
    <property type="match status" value="1"/>
</dbReference>
<dbReference type="Pfam" id="PF02605">
    <property type="entry name" value="PsaL"/>
    <property type="match status" value="1"/>
</dbReference>
<dbReference type="SUPFAM" id="SSF81568">
    <property type="entry name" value="Photosystem I reaction center subunit XI, PsaL"/>
    <property type="match status" value="1"/>
</dbReference>
<name>PSAL_NOSP7</name>
<reference key="1">
    <citation type="journal article" date="2013" name="Plant Physiol.">
        <title>A Nostoc punctiforme Sugar Transporter Necessary to Establish a Cyanobacterium-Plant Symbiosis.</title>
        <authorList>
            <person name="Ekman M."/>
            <person name="Picossi S."/>
            <person name="Campbell E.L."/>
            <person name="Meeks J.C."/>
            <person name="Flores E."/>
        </authorList>
    </citation>
    <scope>NUCLEOTIDE SEQUENCE [LARGE SCALE GENOMIC DNA]</scope>
    <source>
        <strain>ATCC 29133 / PCC 73102</strain>
    </source>
</reference>
<protein>
    <recommendedName>
        <fullName evidence="1">Photosystem I reaction center subunit XI</fullName>
    </recommendedName>
    <alternativeName>
        <fullName evidence="1">PSI subunit V</fullName>
    </alternativeName>
    <alternativeName>
        <fullName evidence="1">PSI-L</fullName>
    </alternativeName>
</protein>
<sequence length="173" mass="18305">MAQAVDASKNLPSDPRNREVVFPAFRDPQLGNLETPVNASPLSKWFINNLPAYRPGLSPARRGLEVGMAHGYWIFGPFAKLGPLRDTDNANLAGLLAAIGLVVLLTGALSLYSNSNPPKALPSVTVPNPPVDAFNSKESWNNFASSFLIGGIGGAVVAYFLTSNLGIIQGLFG</sequence>
<proteinExistence type="inferred from homology"/>
<evidence type="ECO:0000255" key="1">
    <source>
        <dbReference type="HAMAP-Rule" id="MF_00447"/>
    </source>
</evidence>
<comment type="subcellular location">
    <subcellularLocation>
        <location evidence="1">Cellular thylakoid membrane</location>
        <topology evidence="1">Multi-pass membrane protein</topology>
    </subcellularLocation>
</comment>
<comment type="similarity">
    <text evidence="1">Belongs to the PsaL family.</text>
</comment>
<feature type="chain" id="PRO_1000192867" description="Photosystem I reaction center subunit XI">
    <location>
        <begin position="1"/>
        <end position="173"/>
    </location>
</feature>
<feature type="transmembrane region" description="Helical" evidence="1">
    <location>
        <begin position="92"/>
        <end position="112"/>
    </location>
</feature>
<feature type="transmembrane region" description="Helical" evidence="1">
    <location>
        <begin position="148"/>
        <end position="168"/>
    </location>
</feature>
<gene>
    <name evidence="1" type="primary">psaL</name>
    <name type="ordered locus">Npun_F3864</name>
</gene>
<accession>B2J591</accession>
<keyword id="KW-0472">Membrane</keyword>
<keyword id="KW-0602">Photosynthesis</keyword>
<keyword id="KW-0603">Photosystem I</keyword>
<keyword id="KW-1185">Reference proteome</keyword>
<keyword id="KW-0793">Thylakoid</keyword>
<keyword id="KW-0812">Transmembrane</keyword>
<keyword id="KW-1133">Transmembrane helix</keyword>